<reference key="1">
    <citation type="journal article" date="2011" name="Stand. Genomic Sci.">
        <title>Complete genome sequence of the filamentous gliding predatory bacterium Herpetosiphon aurantiacus type strain (114-95(T)).</title>
        <authorList>
            <person name="Kiss H."/>
            <person name="Nett M."/>
            <person name="Domin N."/>
            <person name="Martin K."/>
            <person name="Maresca J.A."/>
            <person name="Copeland A."/>
            <person name="Lapidus A."/>
            <person name="Lucas S."/>
            <person name="Berry K.W."/>
            <person name="Glavina Del Rio T."/>
            <person name="Dalin E."/>
            <person name="Tice H."/>
            <person name="Pitluck S."/>
            <person name="Richardson P."/>
            <person name="Bruce D."/>
            <person name="Goodwin L."/>
            <person name="Han C."/>
            <person name="Detter J.C."/>
            <person name="Schmutz J."/>
            <person name="Brettin T."/>
            <person name="Land M."/>
            <person name="Hauser L."/>
            <person name="Kyrpides N.C."/>
            <person name="Ivanova N."/>
            <person name="Goeker M."/>
            <person name="Woyke T."/>
            <person name="Klenk H.P."/>
            <person name="Bryant D.A."/>
        </authorList>
    </citation>
    <scope>NUCLEOTIDE SEQUENCE [LARGE SCALE GENOMIC DNA]</scope>
    <source>
        <strain>ATCC 23779 / DSM 785 / 114-95</strain>
    </source>
</reference>
<name>MTNA_HERA2</name>
<evidence type="ECO:0000255" key="1">
    <source>
        <dbReference type="HAMAP-Rule" id="MF_01678"/>
    </source>
</evidence>
<evidence type="ECO:0000305" key="2"/>
<accession>A9AYL1</accession>
<sequence>MADVLKTVWWDEVPCLIDQRLLPATLDIVRCEDLNSVIEAIRSMQVRGAPAIGITAAYGMALAAQRSTAQTSSKLLEKLAKAKALLDATRPTAINLAWATQRMLDVAQANHTLEVDQLRQRLLAEAEAIRDQDEAMCRAIGQHGKVLLAQSRNVLTHCNAGGLATAAYGTALAPIRAVHEDGQPIHVWVDETRPFLQGARLTAWELQQAGIDLTLITDNMAAYFMQQGQVDCIIVGSDRIAANGDVANKIGTYGLAVLAKAHNIPLYVAAPTSTIDLQTADGAAIPIEQRSTQEVTHIGQQAIAAAGIKVAHPAFDVTPAHLVTAIITEQGIAYPPFAEQLQTMVEAANAANAGK</sequence>
<protein>
    <recommendedName>
        <fullName evidence="1">Methylthioribose-1-phosphate isomerase</fullName>
        <shortName evidence="1">M1Pi</shortName>
        <shortName evidence="1">MTR-1-P isomerase</shortName>
        <ecNumber evidence="1">5.3.1.23</ecNumber>
    </recommendedName>
    <alternativeName>
        <fullName evidence="1">S-methyl-5-thioribose-1-phosphate isomerase</fullName>
    </alternativeName>
</protein>
<dbReference type="EC" id="5.3.1.23" evidence="1"/>
<dbReference type="EMBL" id="CP000875">
    <property type="protein sequence ID" value="ABX04989.1"/>
    <property type="status" value="ALT_INIT"/>
    <property type="molecule type" value="Genomic_DNA"/>
</dbReference>
<dbReference type="SMR" id="A9AYL1"/>
<dbReference type="FunCoup" id="A9AYL1">
    <property type="interactions" value="462"/>
</dbReference>
<dbReference type="STRING" id="316274.Haur_2349"/>
<dbReference type="KEGG" id="hau:Haur_2349"/>
<dbReference type="eggNOG" id="COG0182">
    <property type="taxonomic scope" value="Bacteria"/>
</dbReference>
<dbReference type="HOGENOM" id="CLU_016218_1_2_0"/>
<dbReference type="InParanoid" id="A9AYL1"/>
<dbReference type="UniPathway" id="UPA00904">
    <property type="reaction ID" value="UER00874"/>
</dbReference>
<dbReference type="Proteomes" id="UP000000787">
    <property type="component" value="Chromosome"/>
</dbReference>
<dbReference type="GO" id="GO:0046523">
    <property type="term" value="F:S-methyl-5-thioribose-1-phosphate isomerase activity"/>
    <property type="evidence" value="ECO:0007669"/>
    <property type="project" value="UniProtKB-UniRule"/>
</dbReference>
<dbReference type="GO" id="GO:0019509">
    <property type="term" value="P:L-methionine salvage from methylthioadenosine"/>
    <property type="evidence" value="ECO:0007669"/>
    <property type="project" value="UniProtKB-UniRule"/>
</dbReference>
<dbReference type="FunFam" id="1.20.120.420:FF:000003">
    <property type="entry name" value="Methylthioribose-1-phosphate isomerase"/>
    <property type="match status" value="1"/>
</dbReference>
<dbReference type="FunFam" id="3.40.50.10470:FF:000006">
    <property type="entry name" value="Methylthioribose-1-phosphate isomerase"/>
    <property type="match status" value="1"/>
</dbReference>
<dbReference type="Gene3D" id="1.20.120.420">
    <property type="entry name" value="translation initiation factor eif-2b, domain 1"/>
    <property type="match status" value="1"/>
</dbReference>
<dbReference type="Gene3D" id="3.40.50.10470">
    <property type="entry name" value="Translation initiation factor eif-2b, domain 2"/>
    <property type="match status" value="1"/>
</dbReference>
<dbReference type="HAMAP" id="MF_01678">
    <property type="entry name" value="Salvage_MtnA"/>
    <property type="match status" value="1"/>
</dbReference>
<dbReference type="InterPro" id="IPR000649">
    <property type="entry name" value="IF-2B-related"/>
</dbReference>
<dbReference type="InterPro" id="IPR005251">
    <property type="entry name" value="IF-M1Pi"/>
</dbReference>
<dbReference type="InterPro" id="IPR042529">
    <property type="entry name" value="IF_2B-like_C"/>
</dbReference>
<dbReference type="InterPro" id="IPR011559">
    <property type="entry name" value="Initiation_fac_2B_a/b/d"/>
</dbReference>
<dbReference type="InterPro" id="IPR027363">
    <property type="entry name" value="M1Pi_N"/>
</dbReference>
<dbReference type="InterPro" id="IPR037171">
    <property type="entry name" value="NagB/RpiA_transferase-like"/>
</dbReference>
<dbReference type="NCBIfam" id="TIGR00524">
    <property type="entry name" value="eIF-2B_rel"/>
    <property type="match status" value="1"/>
</dbReference>
<dbReference type="NCBIfam" id="NF004326">
    <property type="entry name" value="PRK05720.1"/>
    <property type="match status" value="1"/>
</dbReference>
<dbReference type="NCBIfam" id="TIGR00512">
    <property type="entry name" value="salvage_mtnA"/>
    <property type="match status" value="1"/>
</dbReference>
<dbReference type="PANTHER" id="PTHR43475">
    <property type="entry name" value="METHYLTHIORIBOSE-1-PHOSPHATE ISOMERASE"/>
    <property type="match status" value="1"/>
</dbReference>
<dbReference type="PANTHER" id="PTHR43475:SF1">
    <property type="entry name" value="METHYLTHIORIBOSE-1-PHOSPHATE ISOMERASE"/>
    <property type="match status" value="1"/>
</dbReference>
<dbReference type="Pfam" id="PF01008">
    <property type="entry name" value="IF-2B"/>
    <property type="match status" value="1"/>
</dbReference>
<dbReference type="SUPFAM" id="SSF100950">
    <property type="entry name" value="NagB/RpiA/CoA transferase-like"/>
    <property type="match status" value="1"/>
</dbReference>
<organism>
    <name type="scientific">Herpetosiphon aurantiacus (strain ATCC 23779 / DSM 785 / 114-95)</name>
    <dbReference type="NCBI Taxonomy" id="316274"/>
    <lineage>
        <taxon>Bacteria</taxon>
        <taxon>Bacillati</taxon>
        <taxon>Chloroflexota</taxon>
        <taxon>Chloroflexia</taxon>
        <taxon>Herpetosiphonales</taxon>
        <taxon>Herpetosiphonaceae</taxon>
        <taxon>Herpetosiphon</taxon>
    </lineage>
</organism>
<feature type="chain" id="PRO_0000357196" description="Methylthioribose-1-phosphate isomerase">
    <location>
        <begin position="1"/>
        <end position="355"/>
    </location>
</feature>
<feature type="active site" description="Proton donor" evidence="1">
    <location>
        <position position="238"/>
    </location>
</feature>
<feature type="binding site" evidence="1">
    <location>
        <begin position="47"/>
        <end position="49"/>
    </location>
    <ligand>
        <name>substrate</name>
    </ligand>
</feature>
<feature type="binding site" evidence="1">
    <location>
        <position position="90"/>
    </location>
    <ligand>
        <name>substrate</name>
    </ligand>
</feature>
<feature type="binding site" evidence="1">
    <location>
        <position position="197"/>
    </location>
    <ligand>
        <name>substrate</name>
    </ligand>
</feature>
<feature type="binding site" evidence="1">
    <location>
        <begin position="248"/>
        <end position="249"/>
    </location>
    <ligand>
        <name>substrate</name>
    </ligand>
</feature>
<feature type="site" description="Transition state stabilizer" evidence="1">
    <location>
        <position position="158"/>
    </location>
</feature>
<keyword id="KW-0028">Amino-acid biosynthesis</keyword>
<keyword id="KW-0413">Isomerase</keyword>
<keyword id="KW-0486">Methionine biosynthesis</keyword>
<gene>
    <name evidence="1" type="primary">mtnA</name>
    <name type="ordered locus">Haur_2349</name>
</gene>
<comment type="function">
    <text evidence="1">Catalyzes the interconversion of methylthioribose-1-phosphate (MTR-1-P) into methylthioribulose-1-phosphate (MTRu-1-P).</text>
</comment>
<comment type="catalytic activity">
    <reaction evidence="1">
        <text>5-(methylsulfanyl)-alpha-D-ribose 1-phosphate = 5-(methylsulfanyl)-D-ribulose 1-phosphate</text>
        <dbReference type="Rhea" id="RHEA:19989"/>
        <dbReference type="ChEBI" id="CHEBI:58533"/>
        <dbReference type="ChEBI" id="CHEBI:58548"/>
        <dbReference type="EC" id="5.3.1.23"/>
    </reaction>
</comment>
<comment type="pathway">
    <text evidence="1">Amino-acid biosynthesis; L-methionine biosynthesis via salvage pathway; L-methionine from S-methyl-5-thio-alpha-D-ribose 1-phosphate: step 1/6.</text>
</comment>
<comment type="similarity">
    <text evidence="2">Belongs to the eIF-2B alpha/beta/delta subunits family. MtnA subfamily.</text>
</comment>
<comment type="sequence caution" evidence="2">
    <conflict type="erroneous initiation">
        <sequence resource="EMBL-CDS" id="ABX04989"/>
    </conflict>
</comment>
<proteinExistence type="inferred from homology"/>